<sequence length="217" mass="23191">MTAIRVPRRRASADLQGGFDFSRPDEIVCGVDEAGRGPLAGPVVAAAVILDPARPIDGLDDSKALSAKKRDALYDLIVARASAFCVASASVDEIDTLNILHATMLAMKRAVEGLSVLPTLAQIDGNRCPTLTVRAEAIVSGDALVPSISAASILAKVTRDRMLVDLHERFPVYGFNMHVGYSTPQHLAALREHGPCEVHRRSFAPVREALDLMAGSR</sequence>
<feature type="chain" id="PRO_1000031123" description="Ribonuclease HII">
    <location>
        <begin position="1"/>
        <end position="217"/>
    </location>
</feature>
<feature type="domain" description="RNase H type-2" evidence="2">
    <location>
        <begin position="26"/>
        <end position="215"/>
    </location>
</feature>
<feature type="binding site" evidence="1">
    <location>
        <position position="32"/>
    </location>
    <ligand>
        <name>a divalent metal cation</name>
        <dbReference type="ChEBI" id="CHEBI:60240"/>
    </ligand>
</feature>
<feature type="binding site" evidence="1">
    <location>
        <position position="33"/>
    </location>
    <ligand>
        <name>a divalent metal cation</name>
        <dbReference type="ChEBI" id="CHEBI:60240"/>
    </ligand>
</feature>
<feature type="binding site" evidence="1">
    <location>
        <position position="124"/>
    </location>
    <ligand>
        <name>a divalent metal cation</name>
        <dbReference type="ChEBI" id="CHEBI:60240"/>
    </ligand>
</feature>
<comment type="function">
    <text evidence="1">Endonuclease that specifically degrades the RNA of RNA-DNA hybrids.</text>
</comment>
<comment type="catalytic activity">
    <reaction evidence="1">
        <text>Endonucleolytic cleavage to 5'-phosphomonoester.</text>
        <dbReference type="EC" id="3.1.26.4"/>
    </reaction>
</comment>
<comment type="cofactor">
    <cofactor evidence="1">
        <name>Mn(2+)</name>
        <dbReference type="ChEBI" id="CHEBI:29035"/>
    </cofactor>
    <cofactor evidence="1">
        <name>Mg(2+)</name>
        <dbReference type="ChEBI" id="CHEBI:18420"/>
    </cofactor>
    <text evidence="1">Manganese or magnesium. Binds 1 divalent metal ion per monomer in the absence of substrate. May bind a second metal ion after substrate binding.</text>
</comment>
<comment type="subcellular location">
    <subcellularLocation>
        <location evidence="1">Cytoplasm</location>
    </subcellularLocation>
</comment>
<comment type="similarity">
    <text evidence="1">Belongs to the RNase HII family.</text>
</comment>
<reference key="1">
    <citation type="submission" date="2006-08" db="EMBL/GenBank/DDBJ databases">
        <title>Complete sequence of chromosome 1 of Burkholderia cepacia AMMD.</title>
        <authorList>
            <person name="Copeland A."/>
            <person name="Lucas S."/>
            <person name="Lapidus A."/>
            <person name="Barry K."/>
            <person name="Detter J.C."/>
            <person name="Glavina del Rio T."/>
            <person name="Hammon N."/>
            <person name="Israni S."/>
            <person name="Pitluck S."/>
            <person name="Bruce D."/>
            <person name="Chain P."/>
            <person name="Malfatti S."/>
            <person name="Shin M."/>
            <person name="Vergez L."/>
            <person name="Schmutz J."/>
            <person name="Larimer F."/>
            <person name="Land M."/>
            <person name="Hauser L."/>
            <person name="Kyrpides N."/>
            <person name="Kim E."/>
            <person name="Parke J."/>
            <person name="Coenye T."/>
            <person name="Konstantinidis K."/>
            <person name="Ramette A."/>
            <person name="Tiedje J."/>
            <person name="Richardson P."/>
        </authorList>
    </citation>
    <scope>NUCLEOTIDE SEQUENCE [LARGE SCALE GENOMIC DNA]</scope>
    <source>
        <strain>ATCC BAA-244 / DSM 16087 / CCUG 44356 / LMG 19182 / AMMD</strain>
    </source>
</reference>
<dbReference type="EC" id="3.1.26.4" evidence="1"/>
<dbReference type="EMBL" id="CP000440">
    <property type="protein sequence ID" value="ABI87594.1"/>
    <property type="molecule type" value="Genomic_DNA"/>
</dbReference>
<dbReference type="RefSeq" id="WP_011657276.1">
    <property type="nucleotide sequence ID" value="NC_008390.1"/>
</dbReference>
<dbReference type="SMR" id="Q0BE29"/>
<dbReference type="GeneID" id="93085763"/>
<dbReference type="KEGG" id="bam:Bamb_2038"/>
<dbReference type="PATRIC" id="fig|339670.21.peg.2906"/>
<dbReference type="eggNOG" id="COG0164">
    <property type="taxonomic scope" value="Bacteria"/>
</dbReference>
<dbReference type="Proteomes" id="UP000000662">
    <property type="component" value="Chromosome 1"/>
</dbReference>
<dbReference type="GO" id="GO:0005737">
    <property type="term" value="C:cytoplasm"/>
    <property type="evidence" value="ECO:0007669"/>
    <property type="project" value="UniProtKB-SubCell"/>
</dbReference>
<dbReference type="GO" id="GO:0032299">
    <property type="term" value="C:ribonuclease H2 complex"/>
    <property type="evidence" value="ECO:0007669"/>
    <property type="project" value="TreeGrafter"/>
</dbReference>
<dbReference type="GO" id="GO:0030145">
    <property type="term" value="F:manganese ion binding"/>
    <property type="evidence" value="ECO:0007669"/>
    <property type="project" value="UniProtKB-UniRule"/>
</dbReference>
<dbReference type="GO" id="GO:0003723">
    <property type="term" value="F:RNA binding"/>
    <property type="evidence" value="ECO:0007669"/>
    <property type="project" value="InterPro"/>
</dbReference>
<dbReference type="GO" id="GO:0004523">
    <property type="term" value="F:RNA-DNA hybrid ribonuclease activity"/>
    <property type="evidence" value="ECO:0007669"/>
    <property type="project" value="UniProtKB-UniRule"/>
</dbReference>
<dbReference type="GO" id="GO:0043137">
    <property type="term" value="P:DNA replication, removal of RNA primer"/>
    <property type="evidence" value="ECO:0007669"/>
    <property type="project" value="TreeGrafter"/>
</dbReference>
<dbReference type="GO" id="GO:0006298">
    <property type="term" value="P:mismatch repair"/>
    <property type="evidence" value="ECO:0007669"/>
    <property type="project" value="TreeGrafter"/>
</dbReference>
<dbReference type="CDD" id="cd07182">
    <property type="entry name" value="RNase_HII_bacteria_HII_like"/>
    <property type="match status" value="1"/>
</dbReference>
<dbReference type="FunFam" id="3.30.420.10:FF:000006">
    <property type="entry name" value="Ribonuclease HII"/>
    <property type="match status" value="1"/>
</dbReference>
<dbReference type="Gene3D" id="3.30.420.10">
    <property type="entry name" value="Ribonuclease H-like superfamily/Ribonuclease H"/>
    <property type="match status" value="1"/>
</dbReference>
<dbReference type="HAMAP" id="MF_00052_B">
    <property type="entry name" value="RNase_HII_B"/>
    <property type="match status" value="1"/>
</dbReference>
<dbReference type="InterPro" id="IPR022898">
    <property type="entry name" value="RNase_HII"/>
</dbReference>
<dbReference type="InterPro" id="IPR001352">
    <property type="entry name" value="RNase_HII/HIII"/>
</dbReference>
<dbReference type="InterPro" id="IPR024567">
    <property type="entry name" value="RNase_HII/HIII_dom"/>
</dbReference>
<dbReference type="InterPro" id="IPR012337">
    <property type="entry name" value="RNaseH-like_sf"/>
</dbReference>
<dbReference type="InterPro" id="IPR036397">
    <property type="entry name" value="RNaseH_sf"/>
</dbReference>
<dbReference type="NCBIfam" id="NF000595">
    <property type="entry name" value="PRK00015.1-3"/>
    <property type="match status" value="1"/>
</dbReference>
<dbReference type="NCBIfam" id="NF000596">
    <property type="entry name" value="PRK00015.1-4"/>
    <property type="match status" value="1"/>
</dbReference>
<dbReference type="PANTHER" id="PTHR10954">
    <property type="entry name" value="RIBONUCLEASE H2 SUBUNIT A"/>
    <property type="match status" value="1"/>
</dbReference>
<dbReference type="PANTHER" id="PTHR10954:SF18">
    <property type="entry name" value="RIBONUCLEASE HII"/>
    <property type="match status" value="1"/>
</dbReference>
<dbReference type="Pfam" id="PF01351">
    <property type="entry name" value="RNase_HII"/>
    <property type="match status" value="1"/>
</dbReference>
<dbReference type="SUPFAM" id="SSF53098">
    <property type="entry name" value="Ribonuclease H-like"/>
    <property type="match status" value="1"/>
</dbReference>
<dbReference type="PROSITE" id="PS51975">
    <property type="entry name" value="RNASE_H_2"/>
    <property type="match status" value="1"/>
</dbReference>
<gene>
    <name evidence="1" type="primary">rnhB</name>
    <name type="ordered locus">Bamb_2038</name>
</gene>
<protein>
    <recommendedName>
        <fullName evidence="1">Ribonuclease HII</fullName>
        <shortName evidence="1">RNase HII</shortName>
        <ecNumber evidence="1">3.1.26.4</ecNumber>
    </recommendedName>
</protein>
<evidence type="ECO:0000255" key="1">
    <source>
        <dbReference type="HAMAP-Rule" id="MF_00052"/>
    </source>
</evidence>
<evidence type="ECO:0000255" key="2">
    <source>
        <dbReference type="PROSITE-ProRule" id="PRU01319"/>
    </source>
</evidence>
<accession>Q0BE29</accession>
<name>RNH2_BURCM</name>
<keyword id="KW-0963">Cytoplasm</keyword>
<keyword id="KW-0255">Endonuclease</keyword>
<keyword id="KW-0378">Hydrolase</keyword>
<keyword id="KW-0464">Manganese</keyword>
<keyword id="KW-0479">Metal-binding</keyword>
<keyword id="KW-0540">Nuclease</keyword>
<proteinExistence type="inferred from homology"/>
<organism>
    <name type="scientific">Burkholderia ambifaria (strain ATCC BAA-244 / DSM 16087 / CCUG 44356 / LMG 19182 / AMMD)</name>
    <name type="common">Burkholderia cepacia (strain AMMD)</name>
    <dbReference type="NCBI Taxonomy" id="339670"/>
    <lineage>
        <taxon>Bacteria</taxon>
        <taxon>Pseudomonadati</taxon>
        <taxon>Pseudomonadota</taxon>
        <taxon>Betaproteobacteria</taxon>
        <taxon>Burkholderiales</taxon>
        <taxon>Burkholderiaceae</taxon>
        <taxon>Burkholderia</taxon>
        <taxon>Burkholderia cepacia complex</taxon>
    </lineage>
</organism>